<sequence>MSSFFVAGTDTNVGKTTAARAMIQALQGQGVQVVGYKPIACCGEESIYPVAQSENTSDYDHFVNADVLTLMHSTKENVSYQDINSYTFSHCAPMLTQDKMRIKLDKINCDLTRLNQTYQSVVVEGSFGLMTPMAEGKSFADWIAQQKMPVVLVVGIKDGCVNHALLTVKVIQQLGVPLLGWIANRINPLLSHYAEIVDLLVEHIDAPLLGKIPYLHKPEEQELGHYLTNIDRLMYMQTEFIK</sequence>
<name>BIOD1_HAEIN</name>
<organism>
    <name type="scientific">Haemophilus influenzae (strain ATCC 51907 / DSM 11121 / KW20 / Rd)</name>
    <dbReference type="NCBI Taxonomy" id="71421"/>
    <lineage>
        <taxon>Bacteria</taxon>
        <taxon>Pseudomonadati</taxon>
        <taxon>Pseudomonadota</taxon>
        <taxon>Gammaproteobacteria</taxon>
        <taxon>Pasteurellales</taxon>
        <taxon>Pasteurellaceae</taxon>
        <taxon>Haemophilus</taxon>
    </lineage>
</organism>
<reference key="1">
    <citation type="journal article" date="1995" name="Science">
        <title>Whole-genome random sequencing and assembly of Haemophilus influenzae Rd.</title>
        <authorList>
            <person name="Fleischmann R.D."/>
            <person name="Adams M.D."/>
            <person name="White O."/>
            <person name="Clayton R.A."/>
            <person name="Kirkness E.F."/>
            <person name="Kerlavage A.R."/>
            <person name="Bult C.J."/>
            <person name="Tomb J.-F."/>
            <person name="Dougherty B.A."/>
            <person name="Merrick J.M."/>
            <person name="McKenney K."/>
            <person name="Sutton G.G."/>
            <person name="FitzHugh W."/>
            <person name="Fields C.A."/>
            <person name="Gocayne J.D."/>
            <person name="Scott J.D."/>
            <person name="Shirley R."/>
            <person name="Liu L.-I."/>
            <person name="Glodek A."/>
            <person name="Kelley J.M."/>
            <person name="Weidman J.F."/>
            <person name="Phillips C.A."/>
            <person name="Spriggs T."/>
            <person name="Hedblom E."/>
            <person name="Cotton M.D."/>
            <person name="Utterback T.R."/>
            <person name="Hanna M.C."/>
            <person name="Nguyen D.T."/>
            <person name="Saudek D.M."/>
            <person name="Brandon R.C."/>
            <person name="Fine L.D."/>
            <person name="Fritchman J.L."/>
            <person name="Fuhrmann J.L."/>
            <person name="Geoghagen N.S.M."/>
            <person name="Gnehm C.L."/>
            <person name="McDonald L.A."/>
            <person name="Small K.V."/>
            <person name="Fraser C.M."/>
            <person name="Smith H.O."/>
            <person name="Venter J.C."/>
        </authorList>
    </citation>
    <scope>NUCLEOTIDE SEQUENCE [LARGE SCALE GENOMIC DNA]</scope>
    <source>
        <strain>ATCC 51907 / DSM 11121 / KW20 / Rd</strain>
    </source>
</reference>
<comment type="function">
    <text evidence="1">Catalyzes a mechanistically unusual reaction, the ATP-dependent insertion of CO2 between the N7 and N8 nitrogen atoms of 7,8-diaminopelargonic acid (DAPA, also called 7,8-diammoniononanoate) to form a ureido ring.</text>
</comment>
<comment type="catalytic activity">
    <reaction evidence="1">
        <text>(7R,8S)-7,8-diammoniononanoate + CO2 + ATP = (4R,5S)-dethiobiotin + ADP + phosphate + 3 H(+)</text>
        <dbReference type="Rhea" id="RHEA:15805"/>
        <dbReference type="ChEBI" id="CHEBI:15378"/>
        <dbReference type="ChEBI" id="CHEBI:16526"/>
        <dbReference type="ChEBI" id="CHEBI:30616"/>
        <dbReference type="ChEBI" id="CHEBI:43474"/>
        <dbReference type="ChEBI" id="CHEBI:149469"/>
        <dbReference type="ChEBI" id="CHEBI:149473"/>
        <dbReference type="ChEBI" id="CHEBI:456216"/>
        <dbReference type="EC" id="6.3.3.3"/>
    </reaction>
</comment>
<comment type="cofactor">
    <cofactor evidence="1">
        <name>Mg(2+)</name>
        <dbReference type="ChEBI" id="CHEBI:18420"/>
    </cofactor>
</comment>
<comment type="pathway">
    <text evidence="1">Cofactor biosynthesis; biotin biosynthesis; biotin from 7,8-diaminononanoate: step 1/2.</text>
</comment>
<comment type="subunit">
    <text evidence="1">Homodimer.</text>
</comment>
<comment type="subcellular location">
    <subcellularLocation>
        <location evidence="1">Cytoplasm</location>
    </subcellularLocation>
</comment>
<comment type="similarity">
    <text evidence="1">Belongs to the dethiobiotin synthetase family.</text>
</comment>
<protein>
    <recommendedName>
        <fullName evidence="1">ATP-dependent dethiobiotin synthetase BioD 1</fullName>
        <ecNumber evidence="1">6.3.3.3</ecNumber>
    </recommendedName>
    <alternativeName>
        <fullName evidence="1">DTB synthetase 1</fullName>
        <shortName evidence="1">DTBS 1</shortName>
    </alternativeName>
    <alternativeName>
        <fullName evidence="1">Dethiobiotin synthase 1</fullName>
    </alternativeName>
</protein>
<gene>
    <name evidence="1" type="primary">bioD1</name>
    <name type="synonym">bioD-A</name>
    <name type="ordered locus">HI_1445</name>
</gene>
<accession>P45209</accession>
<feature type="chain" id="PRO_0000187969" description="ATP-dependent dethiobiotin synthetase BioD 1">
    <location>
        <begin position="1"/>
        <end position="242"/>
    </location>
</feature>
<feature type="active site" evidence="1">
    <location>
        <position position="37"/>
    </location>
</feature>
<feature type="binding site" evidence="1">
    <location>
        <begin position="12"/>
        <end position="17"/>
    </location>
    <ligand>
        <name>ATP</name>
        <dbReference type="ChEBI" id="CHEBI:30616"/>
    </ligand>
</feature>
<feature type="binding site" evidence="1">
    <location>
        <position position="16"/>
    </location>
    <ligand>
        <name>Mg(2+)</name>
        <dbReference type="ChEBI" id="CHEBI:18420"/>
    </ligand>
</feature>
<feature type="binding site" evidence="1">
    <location>
        <position position="66"/>
    </location>
    <ligand>
        <name>ATP</name>
        <dbReference type="ChEBI" id="CHEBI:30616"/>
    </ligand>
</feature>
<feature type="binding site" evidence="1">
    <location>
        <position position="66"/>
    </location>
    <ligand>
        <name>Mg(2+)</name>
        <dbReference type="ChEBI" id="CHEBI:18420"/>
    </ligand>
</feature>
<feature type="binding site" evidence="1">
    <location>
        <position position="124"/>
    </location>
    <ligand>
        <name>Mg(2+)</name>
        <dbReference type="ChEBI" id="CHEBI:18420"/>
    </ligand>
</feature>
<feature type="binding site" evidence="1">
    <location>
        <begin position="184"/>
        <end position="185"/>
    </location>
    <ligand>
        <name>ATP</name>
        <dbReference type="ChEBI" id="CHEBI:30616"/>
    </ligand>
</feature>
<feature type="binding site" evidence="1">
    <location>
        <begin position="213"/>
        <end position="215"/>
    </location>
    <ligand>
        <name>ATP</name>
        <dbReference type="ChEBI" id="CHEBI:30616"/>
    </ligand>
</feature>
<feature type="binding site" evidence="1">
    <location>
        <position position="220"/>
    </location>
    <ligand>
        <name>ATP</name>
        <dbReference type="ChEBI" id="CHEBI:30616"/>
    </ligand>
</feature>
<keyword id="KW-0067">ATP-binding</keyword>
<keyword id="KW-0093">Biotin biosynthesis</keyword>
<keyword id="KW-0963">Cytoplasm</keyword>
<keyword id="KW-0436">Ligase</keyword>
<keyword id="KW-0460">Magnesium</keyword>
<keyword id="KW-0479">Metal-binding</keyword>
<keyword id="KW-0547">Nucleotide-binding</keyword>
<keyword id="KW-1185">Reference proteome</keyword>
<proteinExistence type="inferred from homology"/>
<dbReference type="EC" id="6.3.3.3" evidence="1"/>
<dbReference type="EMBL" id="L42023">
    <property type="protein sequence ID" value="AAC23095.1"/>
    <property type="molecule type" value="Genomic_DNA"/>
</dbReference>
<dbReference type="PIR" id="I64123">
    <property type="entry name" value="I64123"/>
</dbReference>
<dbReference type="RefSeq" id="NP_439597.1">
    <property type="nucleotide sequence ID" value="NC_000907.1"/>
</dbReference>
<dbReference type="SMR" id="P45209"/>
<dbReference type="STRING" id="71421.HI_1445"/>
<dbReference type="EnsemblBacteria" id="AAC23095">
    <property type="protein sequence ID" value="AAC23095"/>
    <property type="gene ID" value="HI_1445"/>
</dbReference>
<dbReference type="KEGG" id="hin:HI_1445"/>
<dbReference type="PATRIC" id="fig|71421.8.peg.1507"/>
<dbReference type="eggNOG" id="COG0132">
    <property type="taxonomic scope" value="Bacteria"/>
</dbReference>
<dbReference type="HOGENOM" id="CLU_072551_0_0_6"/>
<dbReference type="OrthoDB" id="9802097at2"/>
<dbReference type="PhylomeDB" id="P45209"/>
<dbReference type="BioCyc" id="HINF71421:G1GJ1-1471-MONOMER"/>
<dbReference type="UniPathway" id="UPA00078">
    <property type="reaction ID" value="UER00161"/>
</dbReference>
<dbReference type="Proteomes" id="UP000000579">
    <property type="component" value="Chromosome"/>
</dbReference>
<dbReference type="GO" id="GO:0005829">
    <property type="term" value="C:cytosol"/>
    <property type="evidence" value="ECO:0000318"/>
    <property type="project" value="GO_Central"/>
</dbReference>
<dbReference type="GO" id="GO:0005524">
    <property type="term" value="F:ATP binding"/>
    <property type="evidence" value="ECO:0007669"/>
    <property type="project" value="UniProtKB-UniRule"/>
</dbReference>
<dbReference type="GO" id="GO:0004141">
    <property type="term" value="F:dethiobiotin synthase activity"/>
    <property type="evidence" value="ECO:0000318"/>
    <property type="project" value="GO_Central"/>
</dbReference>
<dbReference type="GO" id="GO:0000287">
    <property type="term" value="F:magnesium ion binding"/>
    <property type="evidence" value="ECO:0007669"/>
    <property type="project" value="UniProtKB-UniRule"/>
</dbReference>
<dbReference type="GO" id="GO:0009102">
    <property type="term" value="P:biotin biosynthetic process"/>
    <property type="evidence" value="ECO:0000318"/>
    <property type="project" value="GO_Central"/>
</dbReference>
<dbReference type="CDD" id="cd03109">
    <property type="entry name" value="DTBS"/>
    <property type="match status" value="1"/>
</dbReference>
<dbReference type="FunFam" id="3.40.50.300:FF:000292">
    <property type="entry name" value="ATP-dependent dethiobiotin synthetase BioD"/>
    <property type="match status" value="1"/>
</dbReference>
<dbReference type="Gene3D" id="3.40.50.300">
    <property type="entry name" value="P-loop containing nucleotide triphosphate hydrolases"/>
    <property type="match status" value="1"/>
</dbReference>
<dbReference type="HAMAP" id="MF_00336">
    <property type="entry name" value="BioD"/>
    <property type="match status" value="1"/>
</dbReference>
<dbReference type="InterPro" id="IPR004472">
    <property type="entry name" value="DTB_synth_BioD"/>
</dbReference>
<dbReference type="InterPro" id="IPR027417">
    <property type="entry name" value="P-loop_NTPase"/>
</dbReference>
<dbReference type="NCBIfam" id="TIGR00347">
    <property type="entry name" value="bioD"/>
    <property type="match status" value="1"/>
</dbReference>
<dbReference type="PANTHER" id="PTHR43210">
    <property type="entry name" value="DETHIOBIOTIN SYNTHETASE"/>
    <property type="match status" value="1"/>
</dbReference>
<dbReference type="PANTHER" id="PTHR43210:SF5">
    <property type="entry name" value="DETHIOBIOTIN SYNTHETASE"/>
    <property type="match status" value="1"/>
</dbReference>
<dbReference type="Pfam" id="PF13500">
    <property type="entry name" value="AAA_26"/>
    <property type="match status" value="1"/>
</dbReference>
<dbReference type="PIRSF" id="PIRSF006755">
    <property type="entry name" value="DTB_synth"/>
    <property type="match status" value="1"/>
</dbReference>
<dbReference type="SUPFAM" id="SSF52540">
    <property type="entry name" value="P-loop containing nucleoside triphosphate hydrolases"/>
    <property type="match status" value="1"/>
</dbReference>
<evidence type="ECO:0000255" key="1">
    <source>
        <dbReference type="HAMAP-Rule" id="MF_00336"/>
    </source>
</evidence>